<organism>
    <name type="scientific">Escherichia phage Mu</name>
    <name type="common">Bacteriophage Mu</name>
    <dbReference type="NCBI Taxonomy" id="2681603"/>
    <lineage>
        <taxon>Viruses</taxon>
        <taxon>Duplodnaviria</taxon>
        <taxon>Heunggongvirae</taxon>
        <taxon>Uroviricota</taxon>
        <taxon>Caudoviricetes</taxon>
        <taxon>Muvirus</taxon>
        <taxon>Muvirus mu</taxon>
    </lineage>
</organism>
<gene>
    <name type="primary">mom</name>
    <name type="ordered locus">Mup55</name>
</gene>
<keyword id="KW-0002">3D-structure</keyword>
<keyword id="KW-1035">Host cytoplasm</keyword>
<keyword id="KW-0945">Host-virus interaction</keyword>
<keyword id="KW-1090">Inhibition of host innate immune response by virus</keyword>
<keyword id="KW-0408">Iron</keyword>
<keyword id="KW-0426">Late protein</keyword>
<keyword id="KW-0479">Metal-binding</keyword>
<keyword id="KW-1185">Reference proteome</keyword>
<keyword id="KW-1258">Restriction-modification system evasion by virus</keyword>
<keyword id="KW-0808">Transferase</keyword>
<keyword id="KW-0899">Viral immunoevasion</keyword>
<evidence type="ECO:0000269" key="1">
    <source>
    </source>
</evidence>
<evidence type="ECO:0000269" key="2">
    <source>
    </source>
</evidence>
<evidence type="ECO:0000269" key="3">
    <source>
    </source>
</evidence>
<evidence type="ECO:0000269" key="4">
    <source>
    </source>
</evidence>
<evidence type="ECO:0000269" key="5">
    <source>
    </source>
</evidence>
<evidence type="ECO:0000269" key="6">
    <source>
    </source>
</evidence>
<evidence type="ECO:0000303" key="7">
    <source>
    </source>
</evidence>
<evidence type="ECO:0000305" key="8"/>
<evidence type="ECO:0000305" key="9">
    <source>
    </source>
</evidence>
<dbReference type="EMBL" id="V01463">
    <property type="protein sequence ID" value="CAA24710.1"/>
    <property type="molecule type" value="Genomic_DNA"/>
</dbReference>
<dbReference type="EMBL" id="AF083977">
    <property type="protein sequence ID" value="AAF01131.1"/>
    <property type="molecule type" value="Genomic_DNA"/>
</dbReference>
<dbReference type="PIR" id="B21135">
    <property type="entry name" value="ZQBPMU"/>
</dbReference>
<dbReference type="RefSeq" id="NP_050657.1">
    <property type="nucleotide sequence ID" value="NC_000929.1"/>
</dbReference>
<dbReference type="PDB" id="8BV8">
    <property type="method" value="X-ray"/>
    <property type="resolution" value="2.03 A"/>
    <property type="chains" value="A/B=11-241"/>
</dbReference>
<dbReference type="PDBsum" id="8BV8"/>
<dbReference type="SMR" id="P06018"/>
<dbReference type="GeneID" id="2636302"/>
<dbReference type="KEGG" id="vg:2636302"/>
<dbReference type="Proteomes" id="UP000002611">
    <property type="component" value="Genome"/>
</dbReference>
<dbReference type="GO" id="GO:0030430">
    <property type="term" value="C:host cell cytoplasm"/>
    <property type="evidence" value="ECO:0007669"/>
    <property type="project" value="UniProtKB-SubCell"/>
</dbReference>
<dbReference type="GO" id="GO:0046872">
    <property type="term" value="F:metal ion binding"/>
    <property type="evidence" value="ECO:0007669"/>
    <property type="project" value="UniProtKB-KW"/>
</dbReference>
<dbReference type="GO" id="GO:0016740">
    <property type="term" value="F:transferase activity"/>
    <property type="evidence" value="ECO:0007669"/>
    <property type="project" value="UniProtKB-KW"/>
</dbReference>
<dbReference type="GO" id="GO:0099018">
    <property type="term" value="P:symbiont-mediated evasion of host restriction-modification system"/>
    <property type="evidence" value="ECO:0007669"/>
    <property type="project" value="UniProtKB-KW"/>
</dbReference>
<dbReference type="GO" id="GO:0052170">
    <property type="term" value="P:symbiont-mediated suppression of host innate immune response"/>
    <property type="evidence" value="ECO:0007669"/>
    <property type="project" value="UniProtKB-KW"/>
</dbReference>
<feature type="chain" id="PRO_0000077664" description="Methylcarbamoylase mom">
    <location>
        <begin position="1"/>
        <end position="241"/>
    </location>
</feature>
<feature type="binding site" evidence="9">
    <location>
        <position position="59"/>
    </location>
    <ligand>
        <name>Fe cation</name>
        <dbReference type="ChEBI" id="CHEBI:24875"/>
        <note>catalytic</note>
    </ligand>
</feature>
<feature type="binding site" evidence="9">
    <location>
        <position position="149"/>
    </location>
    <ligand>
        <name>Fe cation</name>
        <dbReference type="ChEBI" id="CHEBI:24875"/>
        <note>catalytic</note>
    </ligand>
</feature>
<feature type="binding site" evidence="9">
    <location>
        <position position="159"/>
    </location>
    <ligand>
        <name>Fe cation</name>
        <dbReference type="ChEBI" id="CHEBI:24875"/>
        <note>catalytic</note>
    </ligand>
</feature>
<feature type="mutagenesis site" description="Loss of acetyl CoA-binding." evidence="4">
    <original>H</original>
    <variation>A</variation>
    <location>
        <position position="58"/>
    </location>
</feature>
<feature type="mutagenesis site" description="Loss of iron- and acetyl CoA-binding." evidence="4">
    <original>Y</original>
    <variation>A</variation>
    <location>
        <position position="59"/>
    </location>
</feature>
<feature type="mutagenesis site" description="No effect on iron-binding or acetyl CoA-binding." evidence="4">
    <original>R</original>
    <variation>A</variation>
    <location>
        <position position="111"/>
    </location>
</feature>
<feature type="mutagenesis site" description="Loss of acetyl CoA-binding." evidence="4">
    <original>S</original>
    <variation>A</variation>
    <location>
        <position position="124"/>
    </location>
</feature>
<feature type="mutagenesis site" description="Loss of iron-binding." evidence="4">
    <original>D</original>
    <variation>A</variation>
    <location>
        <position position="149"/>
    </location>
</feature>
<feature type="mutagenesis site" description="Loss of iron- and acetyl CoA-binding." evidence="4">
    <original>Y</original>
    <variation>A</variation>
    <location>
        <position position="159"/>
    </location>
</feature>
<reference key="1">
    <citation type="journal article" date="1983" name="Cold Spring Harb. Symp. Quant. Biol.">
        <title>Methylation regulates the expression of a DNA-modification function encoded by bacteriophage Mu.</title>
        <authorList>
            <person name="Kahmann R."/>
        </authorList>
    </citation>
    <scope>NUCLEOTIDE SEQUENCE [GENOMIC DNA]</scope>
</reference>
<reference key="2">
    <citation type="journal article" date="1984" name="Cell">
        <title>Analysis of the methylation-regulated Mu mom transcript.</title>
        <authorList>
            <person name="Plasterk R.H.A."/>
            <person name="Vollering M."/>
            <person name="Brinkman A."/>
            <person name="van de Putte P."/>
        </authorList>
    </citation>
    <scope>NUCLEOTIDE SEQUENCE [GENOMIC DNA]</scope>
</reference>
<reference key="3">
    <citation type="journal article" date="2002" name="J. Mol. Biol.">
        <title>Bacteriophage Mu genome sequence: analysis and comparison with Mu-like prophages in Haemophilus, Neisseria and Deinococcus.</title>
        <authorList>
            <person name="Morgan G.J."/>
            <person name="Hatfull G.F."/>
            <person name="Casjens S."/>
            <person name="Hendrix R.W."/>
        </authorList>
    </citation>
    <scope>NUCLEOTIDE SEQUENCE [LARGE SCALE GENOMIC DNA]</scope>
</reference>
<reference key="4">
    <citation type="journal article" date="1976" name="Virology">
        <title>The DNA modification function of temperate phage Mu-1.</title>
        <authorList>
            <person name="Toussaint A."/>
        </authorList>
    </citation>
    <scope>FUNCTION</scope>
</reference>
<reference key="5">
    <citation type="journal article" date="1983" name="Proc. Natl. Acad. Sci. U.S.A.">
        <title>Purification and characterization of the unusual deoxynucleoside, alpha-N-(9-beta-D-2'-deoxyribofuranosylpurin-6-yl)glycinamide, specified by the phage Mu modification function.</title>
        <authorList>
            <person name="Swinton D."/>
            <person name="Hattman S."/>
            <person name="Crain P.F."/>
            <person name="Cheng C.S."/>
            <person name="Smith D.L."/>
            <person name="McCloskey J.A."/>
        </authorList>
    </citation>
    <scope>CHARACTERIZATION</scope>
</reference>
<reference key="6">
    <citation type="journal article" date="1985" name="Gene">
        <title>The mom gene of bacteriophage mu: a unique regulatory scheme to control a lethal function.</title>
        <authorList>
            <person name="Kahmann R."/>
            <person name="Seiler A."/>
            <person name="Wulczyn F.G."/>
            <person name="Pfaff E."/>
        </authorList>
    </citation>
    <scope>INDUCTION</scope>
</reference>
<reference key="7">
    <citation type="journal article" date="1993" name="Genetics">
        <title>Mutational analysis of a C-dependent late promoter of bacteriophage Mu.</title>
        <authorList>
            <person name="Chiang L.W."/>
            <person name="Howe M.M."/>
        </authorList>
    </citation>
    <scope>INDUCTION</scope>
</reference>
<reference key="8">
    <citation type="journal article" date="1995" name="FASEB J.">
        <title>Hypermodified bases in DNA.</title>
        <authorList>
            <person name="Gommers-Ampt J.H."/>
            <person name="Borst P."/>
        </authorList>
    </citation>
    <scope>REVIEW</scope>
</reference>
<reference key="9">
    <citation type="journal article" date="1997" name="Nucleic Acids Res.">
        <title>Escherichia coli OxyR modulation of bacteriophage Mu mom expression in dam+ cells can be attributed to its ability to bind hemimethylated Pmom promoter DNA.</title>
        <authorList>
            <person name="Hattman S."/>
            <person name="Sun W."/>
        </authorList>
    </citation>
    <scope>INDUCTION</scope>
</reference>
<reference key="10">
    <citation type="journal article" date="1999" name="Pharmacol. Ther.">
        <title>Unusual transcriptional and translational regulation of the bacteriophage Mu mom operon.</title>
        <authorList>
            <person name="Hattman S."/>
        </authorList>
    </citation>
    <scope>REVIEW</scope>
</reference>
<reference key="11">
    <citation type="journal article" date="2008" name="Cell Cycle">
        <title>Bacteriophage Mu Mom protein responsible for DNA modification is a new member of the acyltransferase superfamily.</title>
        <authorList>
            <person name="Kaminska K.H."/>
            <person name="Bujnicki J.M."/>
        </authorList>
    </citation>
    <scope>FUNCTION</scope>
</reference>
<reference key="12">
    <citation type="journal article" date="2012" name="Nucleic Acids Res.">
        <title>Silencing of toxic gene expression by Fis.</title>
        <authorList>
            <person name="Karambelkar S."/>
            <person name="Swapna G."/>
            <person name="Nagaraja V."/>
        </authorList>
    </citation>
    <scope>INDUCTION</scope>
</reference>
<reference key="13">
    <citation type="journal article" date="2020" name="Nucleic Acids Res.">
        <title>Emergence of a novel immune-evasion strategy from an ancestral protein fold in bacteriophage Mu.</title>
        <authorList>
            <person name="Karambelkar S."/>
            <person name="Udupa S."/>
            <person name="Gowthami V.N."/>
            <person name="Ramachandra S.G."/>
            <person name="Swapna G."/>
            <person name="Nagaraja V."/>
        </authorList>
    </citation>
    <scope>FUNCTION</scope>
    <scope>COFACTOR</scope>
    <scope>CATALYTIC ACTIVITY</scope>
    <scope>MUTAGENESIS OF HIS-58; TYR-59; ARG-111; SER-124; ASP-149 AND TYR-159</scope>
</reference>
<protein>
    <recommendedName>
        <fullName evidence="7">Methylcarbamoylase mom</fullName>
    </recommendedName>
    <alternativeName>
        <fullName>Adenine modification enzyme mom</fullName>
    </alternativeName>
    <alternativeName>
        <fullName>Gene product 55</fullName>
        <shortName>gp55</shortName>
    </alternativeName>
    <alternativeName>
        <fullName>Gene product mom</fullName>
        <shortName>gpMom</shortName>
    </alternativeName>
    <alternativeName>
        <fullName>Modification of Mu</fullName>
        <shortName>Mom</shortName>
    </alternativeName>
</protein>
<name>MOM_BPMU</name>
<accession>P06018</accession>
<proteinExistence type="evidence at protein level"/>
<comment type="function">
    <text evidence="1 4">Iron-binding protein that performs methylcarbamoylation of adenine using acetyl CoA (PubMed:32369169). This chemical modificaltion makes the viral DNA resistant to a variety of host type I and type II restriction enzymes by modifying approximately 15% of DNA adenine residues (PubMed:32369169). The modification called momylation changes adenine for N6-methylcarbamoyl adenine and occurs just before packaging (PubMed:1258376, PubMed:32369169). Target sequences are 5'-(C or G)-A-(Cor G)-N-(C or T)-3' (PubMed:1258376). Also usually modifies adenine residues in the host cellular DNA (PubMed:1258376).</text>
</comment>
<comment type="catalytic activity">
    <reaction evidence="4">
        <text>a 2'-deoxyadenosine in DNA + acetyl-CoA + AH2 + NH4(+) + O2 = a N(6)-methylcarbamoyl-2'-deoxyadenosine in DNA + A + CoA + 2 H2O + H(+)</text>
        <dbReference type="Rhea" id="RHEA:65948"/>
        <dbReference type="Rhea" id="RHEA-COMP:12418"/>
        <dbReference type="Rhea" id="RHEA-COMP:16940"/>
        <dbReference type="ChEBI" id="CHEBI:13193"/>
        <dbReference type="ChEBI" id="CHEBI:15377"/>
        <dbReference type="ChEBI" id="CHEBI:15378"/>
        <dbReference type="ChEBI" id="CHEBI:15379"/>
        <dbReference type="ChEBI" id="CHEBI:17499"/>
        <dbReference type="ChEBI" id="CHEBI:28938"/>
        <dbReference type="ChEBI" id="CHEBI:57287"/>
        <dbReference type="ChEBI" id="CHEBI:57288"/>
        <dbReference type="ChEBI" id="CHEBI:90615"/>
        <dbReference type="ChEBI" id="CHEBI:166827"/>
    </reaction>
</comment>
<comment type="cofactor">
    <cofactor>
        <name>Fe(2+)</name>
        <dbReference type="ChEBI" id="CHEBI:29033"/>
    </cofactor>
    <cofactor>
        <name>Fe(3+)</name>
        <dbReference type="ChEBI" id="CHEBI:29034"/>
    </cofactor>
    <text evidence="4">Mn(2+), Zn(2+), Mg(2+), Ca(2+), Co(2+) and Cu(2+) showed undetectable interaction.</text>
</comment>
<comment type="subcellular location">
    <subcellularLocation>
        <location evidence="8">Host cytoplasm</location>
    </subcellularLocation>
</comment>
<comment type="induction">
    <text evidence="2 3 5 6">Expressed in the late phase of the viral replicative cycle. Mom gene must be expressed very efficiently only at a very late stage in the lytic cycle because its expression is lethal to the host cell. Expression of Mom requires the viral late transcription activator C and the host deoxyadenosine methylase Dam. Dam methylates three viral sites upstream of the mom promoter to prevent binding of the host translational repressor OxyR. If the viral sites are not fully methylated, the host translational repressor OxyR prevents RNAP recruitment by the transactivator C. Host Fis protein might also act as a negative regulator of mom gene expression. Mom expression is further controlled on the translation level by the viral translational activator Com.</text>
</comment>
<comment type="similarity">
    <text evidence="8">Belongs to the mulikevirus mom protein family.</text>
</comment>
<organismHost>
    <name type="scientific">Enterobacteriaceae</name>
    <dbReference type="NCBI Taxonomy" id="543"/>
</organismHost>
<sequence>MPASIPRRNIVGKEKKSRILTKPCVIEYEGQIVGYGSKELRVETISCWLARTIIQTKHYSRRFVNNSYLHLGVFSGRDLVGVLQWGYALNPNSGRRVVLETDNRGYMELNRMWLHDDMPRNSESRAISYALKVIRLLYPSVEWVQSFADERCGRAGVVYQASNFDFIGSHESTFYELDGEWYHEITMNAIKRGGQRGVYLRANKERAVVHKFNQYRYIRFLNKRARKRLNTKLFKVQPYPK</sequence>